<gene>
    <name type="primary">ftnA</name>
    <name type="ordered locus">SA1709</name>
</gene>
<organism>
    <name type="scientific">Staphylococcus aureus (strain N315)</name>
    <dbReference type="NCBI Taxonomy" id="158879"/>
    <lineage>
        <taxon>Bacteria</taxon>
        <taxon>Bacillati</taxon>
        <taxon>Bacillota</taxon>
        <taxon>Bacilli</taxon>
        <taxon>Bacillales</taxon>
        <taxon>Staphylococcaceae</taxon>
        <taxon>Staphylococcus</taxon>
    </lineage>
</organism>
<protein>
    <recommendedName>
        <fullName>Bacterial non-heme ferritin</fullName>
        <ecNumber>1.16.3.2</ecNumber>
    </recommendedName>
</protein>
<comment type="function">
    <text evidence="1">Iron-storage protein.</text>
</comment>
<comment type="catalytic activity">
    <reaction>
        <text>4 Fe(2+) + O2 + 6 H2O = 4 iron(III) oxide-hydroxide + 12 H(+)</text>
        <dbReference type="Rhea" id="RHEA:11972"/>
        <dbReference type="ChEBI" id="CHEBI:15377"/>
        <dbReference type="ChEBI" id="CHEBI:15378"/>
        <dbReference type="ChEBI" id="CHEBI:15379"/>
        <dbReference type="ChEBI" id="CHEBI:29033"/>
        <dbReference type="ChEBI" id="CHEBI:78619"/>
        <dbReference type="EC" id="1.16.3.2"/>
    </reaction>
</comment>
<comment type="subcellular location">
    <subcellularLocation>
        <location evidence="1">Cytoplasm</location>
    </subcellularLocation>
</comment>
<comment type="similarity">
    <text evidence="3">Belongs to the ferritin family. Prokaryotic subfamily.</text>
</comment>
<name>FTN_STAAN</name>
<accession>Q7A4R2</accession>
<sequence>MLSKNLLEALNDQMNHEYFAAHAYMAMAAYCDKESYEGFANFFIQQAKEERFHGQKIYNYINDRGAHAEFRAVSAPKIDFSSILETFKDSLSQEQEVTRRFYNLSEIARQDKDYATISFLNWFLDEQVEEESMFETHINYLTRIGDDSNALYLYEKELGARTFDEE</sequence>
<keyword id="KW-0963">Cytoplasm</keyword>
<keyword id="KW-0408">Iron</keyword>
<keyword id="KW-0409">Iron storage</keyword>
<keyword id="KW-0479">Metal-binding</keyword>
<keyword id="KW-0560">Oxidoreductase</keyword>
<dbReference type="EC" id="1.16.3.2"/>
<dbReference type="EMBL" id="BA000018">
    <property type="protein sequence ID" value="BAB42979.1"/>
    <property type="molecule type" value="Genomic_DNA"/>
</dbReference>
<dbReference type="PIR" id="D89977">
    <property type="entry name" value="D89977"/>
</dbReference>
<dbReference type="RefSeq" id="WP_000949467.1">
    <property type="nucleotide sequence ID" value="NC_002745.2"/>
</dbReference>
<dbReference type="SMR" id="Q7A4R2"/>
<dbReference type="EnsemblBacteria" id="BAB42979">
    <property type="protein sequence ID" value="BAB42979"/>
    <property type="gene ID" value="BAB42979"/>
</dbReference>
<dbReference type="KEGG" id="sau:SA1709"/>
<dbReference type="HOGENOM" id="CLU_065681_1_2_9"/>
<dbReference type="GO" id="GO:0005829">
    <property type="term" value="C:cytosol"/>
    <property type="evidence" value="ECO:0007669"/>
    <property type="project" value="TreeGrafter"/>
</dbReference>
<dbReference type="GO" id="GO:0008199">
    <property type="term" value="F:ferric iron binding"/>
    <property type="evidence" value="ECO:0007669"/>
    <property type="project" value="InterPro"/>
</dbReference>
<dbReference type="GO" id="GO:0008198">
    <property type="term" value="F:ferrous iron binding"/>
    <property type="evidence" value="ECO:0007669"/>
    <property type="project" value="TreeGrafter"/>
</dbReference>
<dbReference type="GO" id="GO:0004322">
    <property type="term" value="F:ferroxidase activity"/>
    <property type="evidence" value="ECO:0007669"/>
    <property type="project" value="TreeGrafter"/>
</dbReference>
<dbReference type="GO" id="GO:0006879">
    <property type="term" value="P:intracellular iron ion homeostasis"/>
    <property type="evidence" value="ECO:0007669"/>
    <property type="project" value="UniProtKB-KW"/>
</dbReference>
<dbReference type="GO" id="GO:0006826">
    <property type="term" value="P:iron ion transport"/>
    <property type="evidence" value="ECO:0007669"/>
    <property type="project" value="InterPro"/>
</dbReference>
<dbReference type="CDD" id="cd01055">
    <property type="entry name" value="Nonheme_Ferritin"/>
    <property type="match status" value="1"/>
</dbReference>
<dbReference type="FunFam" id="1.20.1260.10:FF:000001">
    <property type="entry name" value="Non-heme ferritin"/>
    <property type="match status" value="1"/>
</dbReference>
<dbReference type="Gene3D" id="1.20.1260.10">
    <property type="match status" value="1"/>
</dbReference>
<dbReference type="InterPro" id="IPR001519">
    <property type="entry name" value="Ferritin"/>
</dbReference>
<dbReference type="InterPro" id="IPR012347">
    <property type="entry name" value="Ferritin-like"/>
</dbReference>
<dbReference type="InterPro" id="IPR009040">
    <property type="entry name" value="Ferritin-like_diiron"/>
</dbReference>
<dbReference type="InterPro" id="IPR009078">
    <property type="entry name" value="Ferritin-like_SF"/>
</dbReference>
<dbReference type="InterPro" id="IPR008331">
    <property type="entry name" value="Ferritin_DPS_dom"/>
</dbReference>
<dbReference type="InterPro" id="IPR041719">
    <property type="entry name" value="Ferritin_prok"/>
</dbReference>
<dbReference type="PANTHER" id="PTHR11431:SF127">
    <property type="entry name" value="BACTERIAL NON-HEME FERRITIN"/>
    <property type="match status" value="1"/>
</dbReference>
<dbReference type="PANTHER" id="PTHR11431">
    <property type="entry name" value="FERRITIN"/>
    <property type="match status" value="1"/>
</dbReference>
<dbReference type="Pfam" id="PF00210">
    <property type="entry name" value="Ferritin"/>
    <property type="match status" value="1"/>
</dbReference>
<dbReference type="SUPFAM" id="SSF47240">
    <property type="entry name" value="Ferritin-like"/>
    <property type="match status" value="1"/>
</dbReference>
<dbReference type="PROSITE" id="PS50905">
    <property type="entry name" value="FERRITIN_LIKE"/>
    <property type="match status" value="1"/>
</dbReference>
<feature type="initiator methionine" description="Removed" evidence="1">
    <location>
        <position position="1"/>
    </location>
</feature>
<feature type="chain" id="PRO_0000298969" description="Bacterial non-heme ferritin">
    <location>
        <begin position="2"/>
        <end position="166"/>
    </location>
</feature>
<feature type="domain" description="Ferritin-like diiron" evidence="2">
    <location>
        <begin position="2"/>
        <end position="145"/>
    </location>
</feature>
<feature type="binding site" evidence="2">
    <location>
        <position position="17"/>
    </location>
    <ligand>
        <name>Fe cation</name>
        <dbReference type="ChEBI" id="CHEBI:24875"/>
        <label>1</label>
    </ligand>
</feature>
<feature type="binding site" evidence="2">
    <location>
        <position position="50"/>
    </location>
    <ligand>
        <name>Fe cation</name>
        <dbReference type="ChEBI" id="CHEBI:24875"/>
        <label>1</label>
    </ligand>
</feature>
<feature type="binding site" evidence="2">
    <location>
        <position position="50"/>
    </location>
    <ligand>
        <name>Fe cation</name>
        <dbReference type="ChEBI" id="CHEBI:24875"/>
        <label>2</label>
    </ligand>
</feature>
<feature type="binding site" evidence="2">
    <location>
        <position position="53"/>
    </location>
    <ligand>
        <name>Fe cation</name>
        <dbReference type="ChEBI" id="CHEBI:24875"/>
        <label>1</label>
    </ligand>
</feature>
<feature type="binding site" evidence="2">
    <location>
        <position position="94"/>
    </location>
    <ligand>
        <name>Fe cation</name>
        <dbReference type="ChEBI" id="CHEBI:24875"/>
        <label>2</label>
    </ligand>
</feature>
<feature type="binding site" evidence="2">
    <location>
        <position position="127"/>
    </location>
    <ligand>
        <name>Fe cation</name>
        <dbReference type="ChEBI" id="CHEBI:24875"/>
        <label>2</label>
    </ligand>
</feature>
<reference key="1">
    <citation type="journal article" date="2001" name="Lancet">
        <title>Whole genome sequencing of meticillin-resistant Staphylococcus aureus.</title>
        <authorList>
            <person name="Kuroda M."/>
            <person name="Ohta T."/>
            <person name="Uchiyama I."/>
            <person name="Baba T."/>
            <person name="Yuzawa H."/>
            <person name="Kobayashi I."/>
            <person name="Cui L."/>
            <person name="Oguchi A."/>
            <person name="Aoki K."/>
            <person name="Nagai Y."/>
            <person name="Lian J.-Q."/>
            <person name="Ito T."/>
            <person name="Kanamori M."/>
            <person name="Matsumaru H."/>
            <person name="Maruyama A."/>
            <person name="Murakami H."/>
            <person name="Hosoyama A."/>
            <person name="Mizutani-Ui Y."/>
            <person name="Takahashi N.K."/>
            <person name="Sawano T."/>
            <person name="Inoue R."/>
            <person name="Kaito C."/>
            <person name="Sekimizu K."/>
            <person name="Hirakawa H."/>
            <person name="Kuhara S."/>
            <person name="Goto S."/>
            <person name="Yabuzaki J."/>
            <person name="Kanehisa M."/>
            <person name="Yamashita A."/>
            <person name="Oshima K."/>
            <person name="Furuya K."/>
            <person name="Yoshino C."/>
            <person name="Shiba T."/>
            <person name="Hattori M."/>
            <person name="Ogasawara N."/>
            <person name="Hayashi H."/>
            <person name="Hiramatsu K."/>
        </authorList>
    </citation>
    <scope>NUCLEOTIDE SEQUENCE [LARGE SCALE GENOMIC DNA]</scope>
    <source>
        <strain>N315</strain>
    </source>
</reference>
<reference key="2">
    <citation type="journal article" date="2005" name="J. Microbiol. Methods">
        <title>Correlation of proteomic and transcriptomic profiles of Staphylococcus aureus during the post-exponential phase of growth.</title>
        <authorList>
            <person name="Scherl A."/>
            <person name="Francois P."/>
            <person name="Bento M."/>
            <person name="Deshusses J.M."/>
            <person name="Charbonnier Y."/>
            <person name="Converset V."/>
            <person name="Huyghe A."/>
            <person name="Walter N."/>
            <person name="Hoogland C."/>
            <person name="Appel R.D."/>
            <person name="Sanchez J.-C."/>
            <person name="Zimmermann-Ivol C.G."/>
            <person name="Corthals G.L."/>
            <person name="Hochstrasser D.F."/>
            <person name="Schrenzel J."/>
        </authorList>
    </citation>
    <scope>IDENTIFICATION BY MASS SPECTROMETRY</scope>
    <source>
        <strain>N315</strain>
    </source>
</reference>
<reference key="3">
    <citation type="submission" date="2007-10" db="UniProtKB">
        <title>Shotgun proteomic analysis of total and membrane protein extracts of S. aureus strain N315.</title>
        <authorList>
            <person name="Vaezzadeh A.R."/>
            <person name="Deshusses J."/>
            <person name="Lescuyer P."/>
            <person name="Hochstrasser D.F."/>
        </authorList>
    </citation>
    <scope>IDENTIFICATION BY MASS SPECTROMETRY [LARGE SCALE ANALYSIS]</scope>
    <source>
        <strain>N315</strain>
    </source>
</reference>
<proteinExistence type="evidence at protein level"/>
<evidence type="ECO:0000250" key="1"/>
<evidence type="ECO:0000255" key="2">
    <source>
        <dbReference type="PROSITE-ProRule" id="PRU00085"/>
    </source>
</evidence>
<evidence type="ECO:0000305" key="3"/>